<dbReference type="EMBL" id="U27324">
    <property type="protein sequence ID" value="AAC44590.1"/>
    <property type="molecule type" value="Genomic_DNA"/>
</dbReference>
<dbReference type="EMBL" id="AF071012">
    <property type="protein sequence ID" value="AAC33323.1"/>
    <property type="molecule type" value="Genomic_DNA"/>
</dbReference>
<dbReference type="PIR" id="JC5115">
    <property type="entry name" value="JC5115"/>
</dbReference>
<dbReference type="SMR" id="P49977"/>
<dbReference type="GO" id="GO:0005886">
    <property type="term" value="C:plasma membrane"/>
    <property type="evidence" value="ECO:0007669"/>
    <property type="project" value="UniProtKB-SubCell"/>
</dbReference>
<dbReference type="GO" id="GO:0065002">
    <property type="term" value="P:intracellular protein transmembrane transport"/>
    <property type="evidence" value="ECO:0007669"/>
    <property type="project" value="UniProtKB-UniRule"/>
</dbReference>
<dbReference type="GO" id="GO:0006605">
    <property type="term" value="P:protein targeting"/>
    <property type="evidence" value="ECO:0007669"/>
    <property type="project" value="UniProtKB-UniRule"/>
</dbReference>
<dbReference type="GO" id="GO:0043952">
    <property type="term" value="P:protein transport by the Sec complex"/>
    <property type="evidence" value="ECO:0007669"/>
    <property type="project" value="UniProtKB-UniRule"/>
</dbReference>
<dbReference type="FunFam" id="1.10.3370.10:FF:000001">
    <property type="entry name" value="Preprotein translocase subunit SecY"/>
    <property type="match status" value="1"/>
</dbReference>
<dbReference type="Gene3D" id="1.10.3370.10">
    <property type="entry name" value="SecY subunit domain"/>
    <property type="match status" value="1"/>
</dbReference>
<dbReference type="HAMAP" id="MF_01465">
    <property type="entry name" value="SecY"/>
    <property type="match status" value="1"/>
</dbReference>
<dbReference type="InterPro" id="IPR026593">
    <property type="entry name" value="SecY"/>
</dbReference>
<dbReference type="InterPro" id="IPR002208">
    <property type="entry name" value="SecY/SEC61-alpha"/>
</dbReference>
<dbReference type="InterPro" id="IPR030659">
    <property type="entry name" value="SecY_CS"/>
</dbReference>
<dbReference type="InterPro" id="IPR023201">
    <property type="entry name" value="SecY_dom_sf"/>
</dbReference>
<dbReference type="NCBIfam" id="TIGR00967">
    <property type="entry name" value="3a0501s007"/>
    <property type="match status" value="1"/>
</dbReference>
<dbReference type="PANTHER" id="PTHR10906">
    <property type="entry name" value="SECY/SEC61-ALPHA FAMILY MEMBER"/>
    <property type="match status" value="1"/>
</dbReference>
<dbReference type="Pfam" id="PF00344">
    <property type="entry name" value="SecY"/>
    <property type="match status" value="1"/>
</dbReference>
<dbReference type="PIRSF" id="PIRSF004557">
    <property type="entry name" value="SecY"/>
    <property type="match status" value="1"/>
</dbReference>
<dbReference type="PRINTS" id="PR00303">
    <property type="entry name" value="SECYTRNLCASE"/>
</dbReference>
<dbReference type="SUPFAM" id="SSF103491">
    <property type="entry name" value="Preprotein translocase SecY subunit"/>
    <property type="match status" value="1"/>
</dbReference>
<dbReference type="PROSITE" id="PS00755">
    <property type="entry name" value="SECY_1"/>
    <property type="match status" value="1"/>
</dbReference>
<dbReference type="PROSITE" id="PS00756">
    <property type="entry name" value="SECY_2"/>
    <property type="match status" value="1"/>
</dbReference>
<sequence>MLTAFAPAFKTPDLRKKLLFTLGIIVVYRLGTHIPIPGVDYKNVQECVDQASGNQGLFGLVNMFSGGALLQITVFALGIMPYITASIILQLLTVVIPRLEALKKEGQAGTAKITQYTRYLTVALAILQGTGLVATARSGALFSGCTVAGQIVPDQAIFTTVVMVICMTAGTCVVMWLGELITDRGIGNGMSILMFISIAATFPSALWAIKKQGELADGWIEFGTVILVGLVMVGLVVFVEQAQRRIPVQYAKRMIGRRSYGGTSTYIPLKVNQAGVIPVIFASSLLYIPALIVQFSNSTAGWATWITKNLADTAATPHIILYFFLIVFFAFFYVAISFNPEEVADNMKKYGGFIPGIRAGRPTAEYLSYVLNRITWPGSLYLGLIALVPTMALAGFGANQNFPFGGTSILIIVGVGLETVKQIESQLQQRNYEGFLR</sequence>
<gene>
    <name evidence="1" type="primary">secY</name>
</gene>
<reference key="1">
    <citation type="journal article" date="1996" name="Gene">
        <title>Cloning and sequencing of the secY homolog from Streptomyces lividans 1326.</title>
        <authorList>
            <person name="Ostiguy S."/>
            <person name="Gilbert M."/>
            <person name="Shareck F."/>
            <person name="Kluepfel D."/>
            <person name="Morosoli R."/>
        </authorList>
    </citation>
    <scope>NUCLEOTIDE SEQUENCE [GENOMIC DNA]</scope>
    <source>
        <strain>66 / 1326</strain>
    </source>
</reference>
<reference key="2">
    <citation type="journal article" date="1998" name="Sanop Misaengmul Hakhoe Chi">
        <title>Molecular cloning and characterization of the secY homolog from Streptomyces lividans TK24.</title>
        <authorList>
            <person name="Kim S.O."/>
            <person name="Suh J.W."/>
        </authorList>
    </citation>
    <scope>NUCLEOTIDE SEQUENCE [GENOMIC DNA]</scope>
    <source>
        <strain>TK24</strain>
    </source>
</reference>
<protein>
    <recommendedName>
        <fullName evidence="1">Protein translocase subunit SecY</fullName>
    </recommendedName>
</protein>
<feature type="chain" id="PRO_0000131753" description="Protein translocase subunit SecY">
    <location>
        <begin position="1"/>
        <end position="437"/>
    </location>
</feature>
<feature type="transmembrane region" description="Helical" evidence="1">
    <location>
        <begin position="19"/>
        <end position="39"/>
    </location>
</feature>
<feature type="transmembrane region" description="Helical" evidence="1">
    <location>
        <begin position="69"/>
        <end position="89"/>
    </location>
</feature>
<feature type="transmembrane region" description="Helical" evidence="1">
    <location>
        <begin position="122"/>
        <end position="142"/>
    </location>
</feature>
<feature type="transmembrane region" description="Helical" evidence="1">
    <location>
        <begin position="157"/>
        <end position="177"/>
    </location>
</feature>
<feature type="transmembrane region" description="Helical" evidence="1">
    <location>
        <begin position="189"/>
        <end position="209"/>
    </location>
</feature>
<feature type="transmembrane region" description="Helical" evidence="1">
    <location>
        <begin position="219"/>
        <end position="239"/>
    </location>
</feature>
<feature type="transmembrane region" description="Helical" evidence="1">
    <location>
        <begin position="275"/>
        <end position="295"/>
    </location>
</feature>
<feature type="transmembrane region" description="Helical" evidence="1">
    <location>
        <begin position="318"/>
        <end position="338"/>
    </location>
</feature>
<feature type="transmembrane region" description="Helical" evidence="1">
    <location>
        <begin position="378"/>
        <end position="398"/>
    </location>
</feature>
<feature type="transmembrane region" description="Helical" evidence="1">
    <location>
        <begin position="400"/>
        <end position="420"/>
    </location>
</feature>
<organism>
    <name type="scientific">Streptomyces lividans</name>
    <dbReference type="NCBI Taxonomy" id="1916"/>
    <lineage>
        <taxon>Bacteria</taxon>
        <taxon>Bacillati</taxon>
        <taxon>Actinomycetota</taxon>
        <taxon>Actinomycetes</taxon>
        <taxon>Kitasatosporales</taxon>
        <taxon>Streptomycetaceae</taxon>
        <taxon>Streptomyces</taxon>
    </lineage>
</organism>
<keyword id="KW-1003">Cell membrane</keyword>
<keyword id="KW-0472">Membrane</keyword>
<keyword id="KW-0653">Protein transport</keyword>
<keyword id="KW-0811">Translocation</keyword>
<keyword id="KW-0812">Transmembrane</keyword>
<keyword id="KW-1133">Transmembrane helix</keyword>
<keyword id="KW-0813">Transport</keyword>
<comment type="function">
    <text evidence="1">The central subunit of the protein translocation channel SecYEG. Consists of two halves formed by TMs 1-5 and 6-10. These two domains form a lateral gate at the front which open onto the bilayer between TMs 2 and 7, and are clamped together by SecE at the back. The channel is closed by both a pore ring composed of hydrophobic SecY resides and a short helix (helix 2A) on the extracellular side of the membrane which forms a plug. The plug probably moves laterally to allow the channel to open. The ring and the pore may move independently.</text>
</comment>
<comment type="subunit">
    <text evidence="1">Component of the Sec protein translocase complex. Heterotrimer consisting of SecY, SecE and SecG subunits. The heterotrimers can form oligomers, although 1 heterotrimer is thought to be able to translocate proteins. Interacts with the ribosome. Interacts with SecDF, and other proteins may be involved. Interacts with SecA.</text>
</comment>
<comment type="subcellular location">
    <subcellularLocation>
        <location evidence="1">Cell membrane</location>
        <topology evidence="1">Multi-pass membrane protein</topology>
    </subcellularLocation>
</comment>
<comment type="similarity">
    <text evidence="1">Belongs to the SecY/SEC61-alpha family.</text>
</comment>
<evidence type="ECO:0000255" key="1">
    <source>
        <dbReference type="HAMAP-Rule" id="MF_01465"/>
    </source>
</evidence>
<accession>P49977</accession>
<proteinExistence type="inferred from homology"/>
<name>SECY_STRLI</name>